<protein>
    <recommendedName>
        <fullName evidence="1">Phosphatidylglycerol--prolipoprotein diacylglyceryl transferase</fullName>
        <ecNumber evidence="1">2.5.1.145</ecNumber>
    </recommendedName>
</protein>
<proteinExistence type="inferred from homology"/>
<accession>Q7V2L6</accession>
<evidence type="ECO:0000255" key="1">
    <source>
        <dbReference type="HAMAP-Rule" id="MF_01147"/>
    </source>
</evidence>
<feature type="chain" id="PRO_0000172653" description="Phosphatidylglycerol--prolipoprotein diacylglyceryl transferase">
    <location>
        <begin position="1"/>
        <end position="297"/>
    </location>
</feature>
<feature type="transmembrane region" description="Helical" evidence="1">
    <location>
        <begin position="20"/>
        <end position="40"/>
    </location>
</feature>
<feature type="transmembrane region" description="Helical" evidence="1">
    <location>
        <begin position="58"/>
        <end position="78"/>
    </location>
</feature>
<feature type="transmembrane region" description="Helical" evidence="1">
    <location>
        <begin position="104"/>
        <end position="124"/>
    </location>
</feature>
<feature type="transmembrane region" description="Helical" evidence="1">
    <location>
        <begin position="133"/>
        <end position="153"/>
    </location>
</feature>
<feature type="transmembrane region" description="Helical" evidence="1">
    <location>
        <begin position="194"/>
        <end position="214"/>
    </location>
</feature>
<feature type="transmembrane region" description="Helical" evidence="1">
    <location>
        <begin position="225"/>
        <end position="245"/>
    </location>
</feature>
<feature type="transmembrane region" description="Helical" evidence="1">
    <location>
        <begin position="266"/>
        <end position="286"/>
    </location>
</feature>
<feature type="binding site" evidence="1">
    <location>
        <position position="154"/>
    </location>
    <ligand>
        <name>a 1,2-diacyl-sn-glycero-3-phospho-(1'-sn-glycerol)</name>
        <dbReference type="ChEBI" id="CHEBI:64716"/>
    </ligand>
</feature>
<name>LGT_PROMP</name>
<dbReference type="EC" id="2.5.1.145" evidence="1"/>
<dbReference type="EMBL" id="BX548174">
    <property type="protein sequence ID" value="CAE18919.1"/>
    <property type="molecule type" value="Genomic_DNA"/>
</dbReference>
<dbReference type="RefSeq" id="WP_011132096.1">
    <property type="nucleotide sequence ID" value="NC_005072.1"/>
</dbReference>
<dbReference type="SMR" id="Q7V2L6"/>
<dbReference type="STRING" id="59919.PMM0460"/>
<dbReference type="KEGG" id="pmm:PMM0460"/>
<dbReference type="eggNOG" id="COG0682">
    <property type="taxonomic scope" value="Bacteria"/>
</dbReference>
<dbReference type="HOGENOM" id="CLU_013386_1_2_3"/>
<dbReference type="OrthoDB" id="871140at2"/>
<dbReference type="UniPathway" id="UPA00664"/>
<dbReference type="Proteomes" id="UP000001026">
    <property type="component" value="Chromosome"/>
</dbReference>
<dbReference type="GO" id="GO:0005886">
    <property type="term" value="C:plasma membrane"/>
    <property type="evidence" value="ECO:0007669"/>
    <property type="project" value="UniProtKB-SubCell"/>
</dbReference>
<dbReference type="GO" id="GO:0008961">
    <property type="term" value="F:phosphatidylglycerol-prolipoprotein diacylglyceryl transferase activity"/>
    <property type="evidence" value="ECO:0007669"/>
    <property type="project" value="UniProtKB-UniRule"/>
</dbReference>
<dbReference type="GO" id="GO:0042158">
    <property type="term" value="P:lipoprotein biosynthetic process"/>
    <property type="evidence" value="ECO:0007669"/>
    <property type="project" value="UniProtKB-UniRule"/>
</dbReference>
<dbReference type="HAMAP" id="MF_01147">
    <property type="entry name" value="Lgt"/>
    <property type="match status" value="1"/>
</dbReference>
<dbReference type="InterPro" id="IPR001640">
    <property type="entry name" value="Lgt"/>
</dbReference>
<dbReference type="NCBIfam" id="TIGR00544">
    <property type="entry name" value="lgt"/>
    <property type="match status" value="1"/>
</dbReference>
<dbReference type="PANTHER" id="PTHR30589:SF0">
    <property type="entry name" value="PHOSPHATIDYLGLYCEROL--PROLIPOPROTEIN DIACYLGLYCERYL TRANSFERASE"/>
    <property type="match status" value="1"/>
</dbReference>
<dbReference type="PANTHER" id="PTHR30589">
    <property type="entry name" value="PROLIPOPROTEIN DIACYLGLYCERYL TRANSFERASE"/>
    <property type="match status" value="1"/>
</dbReference>
<dbReference type="Pfam" id="PF01790">
    <property type="entry name" value="LGT"/>
    <property type="match status" value="1"/>
</dbReference>
<dbReference type="PROSITE" id="PS01311">
    <property type="entry name" value="LGT"/>
    <property type="match status" value="1"/>
</dbReference>
<comment type="function">
    <text evidence="1">Catalyzes the transfer of the diacylglyceryl group from phosphatidylglycerol to the sulfhydryl group of the N-terminal cysteine of a prolipoprotein, the first step in the formation of mature lipoproteins.</text>
</comment>
<comment type="catalytic activity">
    <reaction evidence="1">
        <text>L-cysteinyl-[prolipoprotein] + a 1,2-diacyl-sn-glycero-3-phospho-(1'-sn-glycerol) = an S-1,2-diacyl-sn-glyceryl-L-cysteinyl-[prolipoprotein] + sn-glycerol 1-phosphate + H(+)</text>
        <dbReference type="Rhea" id="RHEA:56712"/>
        <dbReference type="Rhea" id="RHEA-COMP:14679"/>
        <dbReference type="Rhea" id="RHEA-COMP:14680"/>
        <dbReference type="ChEBI" id="CHEBI:15378"/>
        <dbReference type="ChEBI" id="CHEBI:29950"/>
        <dbReference type="ChEBI" id="CHEBI:57685"/>
        <dbReference type="ChEBI" id="CHEBI:64716"/>
        <dbReference type="ChEBI" id="CHEBI:140658"/>
        <dbReference type="EC" id="2.5.1.145"/>
    </reaction>
</comment>
<comment type="pathway">
    <text evidence="1">Protein modification; lipoprotein biosynthesis (diacylglyceryl transfer).</text>
</comment>
<comment type="subcellular location">
    <subcellularLocation>
        <location evidence="1">Cell inner membrane</location>
        <topology evidence="1">Multi-pass membrane protein</topology>
    </subcellularLocation>
</comment>
<comment type="similarity">
    <text evidence="1">Belongs to the Lgt family.</text>
</comment>
<sequence length="297" mass="34033">MLTYQAFIQSPGDTFLNLGFLTIRWYGLLISISVVIGLFISKKLAKSRNINPQYISDILPSLIISSIIGARAYYVIFEWRQYSGSNFFTSFNLFNNVIQIPSFIAIWQGGIAIHGGLIGGFLCILYFCKSKNIHLKTFIDILIPSIILGQSIGRWGNFFNNEAFGIPTDLPWKLFVPIQNRPIEFINYQFFHPTFIYESLWNFLIFILLITIFYKQNNKNSVRPGFISCLYLIGYSFGRFWIEGLRTDPLCIGGLPPFCDGGLRMAQFISIFLFSSGLIGLFFLRLKSYKNKTRNNG</sequence>
<organism>
    <name type="scientific">Prochlorococcus marinus subsp. pastoris (strain CCMP1986 / NIES-2087 / MED4)</name>
    <dbReference type="NCBI Taxonomy" id="59919"/>
    <lineage>
        <taxon>Bacteria</taxon>
        <taxon>Bacillati</taxon>
        <taxon>Cyanobacteriota</taxon>
        <taxon>Cyanophyceae</taxon>
        <taxon>Synechococcales</taxon>
        <taxon>Prochlorococcaceae</taxon>
        <taxon>Prochlorococcus</taxon>
    </lineage>
</organism>
<reference key="1">
    <citation type="journal article" date="2003" name="Nature">
        <title>Genome divergence in two Prochlorococcus ecotypes reflects oceanic niche differentiation.</title>
        <authorList>
            <person name="Rocap G."/>
            <person name="Larimer F.W."/>
            <person name="Lamerdin J.E."/>
            <person name="Malfatti S."/>
            <person name="Chain P."/>
            <person name="Ahlgren N.A."/>
            <person name="Arellano A."/>
            <person name="Coleman M."/>
            <person name="Hauser L."/>
            <person name="Hess W.R."/>
            <person name="Johnson Z.I."/>
            <person name="Land M.L."/>
            <person name="Lindell D."/>
            <person name="Post A.F."/>
            <person name="Regala W."/>
            <person name="Shah M."/>
            <person name="Shaw S.L."/>
            <person name="Steglich C."/>
            <person name="Sullivan M.B."/>
            <person name="Ting C.S."/>
            <person name="Tolonen A."/>
            <person name="Webb E.A."/>
            <person name="Zinser E.R."/>
            <person name="Chisholm S.W."/>
        </authorList>
    </citation>
    <scope>NUCLEOTIDE SEQUENCE [LARGE SCALE GENOMIC DNA]</scope>
    <source>
        <strain>CCMP1986 / NIES-2087 / MED4</strain>
    </source>
</reference>
<keyword id="KW-0997">Cell inner membrane</keyword>
<keyword id="KW-1003">Cell membrane</keyword>
<keyword id="KW-0472">Membrane</keyword>
<keyword id="KW-0808">Transferase</keyword>
<keyword id="KW-0812">Transmembrane</keyword>
<keyword id="KW-1133">Transmembrane helix</keyword>
<gene>
    <name evidence="1" type="primary">lgt</name>
    <name type="ordered locus">PMM0460</name>
</gene>